<accession>D4GYH5</accession>
<accession>C3W971</accession>
<protein>
    <recommendedName>
        <fullName>UDP-glucose 6-dehydrogenase AglM</fullName>
        <shortName>UDP-Glc dehydrogenase</shortName>
        <shortName>UDP-GlcDH</shortName>
        <shortName>UDPGDH</shortName>
        <ecNumber>1.1.1.22</ecNumber>
    </recommendedName>
    <alternativeName>
        <fullName>Archaeal glycosylation protein M</fullName>
    </alternativeName>
</protein>
<keyword id="KW-0520">NAD</keyword>
<keyword id="KW-0560">Oxidoreductase</keyword>
<keyword id="KW-1185">Reference proteome</keyword>
<organism>
    <name type="scientific">Haloferax volcanii (strain ATCC 29605 / DSM 3757 / JCM 8879 / NBRC 14742 / NCIMB 2012 / VKM B-1768 / DS2)</name>
    <name type="common">Halobacterium volcanii</name>
    <dbReference type="NCBI Taxonomy" id="309800"/>
    <lineage>
        <taxon>Archaea</taxon>
        <taxon>Methanobacteriati</taxon>
        <taxon>Methanobacteriota</taxon>
        <taxon>Stenosarchaea group</taxon>
        <taxon>Halobacteria</taxon>
        <taxon>Halobacteriales</taxon>
        <taxon>Haloferacaceae</taxon>
        <taxon>Haloferax</taxon>
    </lineage>
</organism>
<feature type="chain" id="PRO_0000415417" description="UDP-glucose 6-dehydrogenase AglM">
    <location>
        <begin position="1"/>
        <end position="430"/>
    </location>
</feature>
<feature type="active site" evidence="1">
    <location>
        <position position="269"/>
    </location>
</feature>
<reference key="1">
    <citation type="journal article" date="2010" name="Mol. Microbiol.">
        <title>N-glycosylation in Archaea: on the coordinated actions of Haloferax volcanii AglF and AglM.</title>
        <authorList>
            <person name="Yurist-Doutsch S."/>
            <person name="Magidovich H."/>
            <person name="Ventura V.V."/>
            <person name="Hitchen P.G."/>
            <person name="Dell A."/>
            <person name="Eichler J."/>
        </authorList>
    </citation>
    <scope>NUCLEOTIDE SEQUENCE [GENOMIC DNA]</scope>
    <scope>FUNCTION</scope>
    <scope>CATALYTIC ACTIVITY</scope>
    <scope>ACTIVITY REGULATION</scope>
    <scope>PATHWAY</scope>
    <scope>GENE NAME</scope>
    <source>
        <strain>DS2 / DS70</strain>
    </source>
</reference>
<reference key="2">
    <citation type="journal article" date="2010" name="PLoS ONE">
        <title>The complete genome sequence of Haloferax volcanii DS2, a model archaeon.</title>
        <authorList>
            <person name="Hartman A.L."/>
            <person name="Norais C."/>
            <person name="Badger J.H."/>
            <person name="Delmas S."/>
            <person name="Haldenby S."/>
            <person name="Madupu R."/>
            <person name="Robinson J."/>
            <person name="Khouri H."/>
            <person name="Ren Q."/>
            <person name="Lowe T.M."/>
            <person name="Maupin-Furlow J."/>
            <person name="Pohlschroder M."/>
            <person name="Daniels C."/>
            <person name="Pfeiffer F."/>
            <person name="Allers T."/>
            <person name="Eisen J.A."/>
        </authorList>
    </citation>
    <scope>NUCLEOTIDE SEQUENCE [LARGE SCALE GENOMIC DNA]</scope>
    <source>
        <strain>ATCC 29605 / DSM 3757 / JCM 8879 / NBRC 14742 / NCIMB 2012 / VKM B-1768 / DS2</strain>
    </source>
</reference>
<reference key="3">
    <citation type="journal article" date="2012" name="J. Bacteriol.">
        <title>N-glycosylation of Haloferax volcanii flagellins requires known Agl proteins and is essential for biosynthesis of stable flagella.</title>
        <authorList>
            <person name="Tripepi M."/>
            <person name="You J."/>
            <person name="Temel S."/>
            <person name="Onder O."/>
            <person name="Brisson D."/>
            <person name="Pohlschroder M."/>
        </authorList>
    </citation>
    <scope>FUNCTION IN GLYCOSYLATION OF FLAGELLINS</scope>
    <scope>DISRUPTION PHENOTYPE</scope>
    <source>
        <strain>H53</strain>
    </source>
</reference>
<gene>
    <name type="primary">aglM</name>
    <name type="ordered locus">HVO_1531</name>
</gene>
<name>AGLM_HALVD</name>
<sequence length="430" mass="45967">MELSIIGSGYVGTTIAACFAELGHDVVNVDIDEDIVASLNDGQAPIHEPGLAELVERYAGDRLRATTDYDEILDTDATFLALPTPSTDDGSIDLGAMKTAATSLGETLARKDDSHLVVTKSTVVPRTTVDVIGPRIEEASGKRVGDGLDIAMNPEFLREGTAVDDFLSPDKIVLGAQTDRAYETLAEIFAPLVERAGNPPVVKTGISEAEMIKYANNAFLASKISLANDLANICKVFGVDSAEVLESIGLDSRIGSAFLGAGLGWGGSCFPKDTAAIIAAARAQGYEPRLLQAAVDVNDGQPERMLDLLRERFDLDGKRVAVLGLAFKPGTDDIRKSRAILLIQALLDAGADVVGYDPVATENMRERFPDIDYADSAADALANADAALVATDWDEFAALDDEFDAMRERIVIDGRRIVTRREGLDYESLV</sequence>
<evidence type="ECO:0000250" key="1"/>
<evidence type="ECO:0000269" key="2">
    <source>
    </source>
</evidence>
<evidence type="ECO:0000269" key="3">
    <source>
    </source>
</evidence>
<evidence type="ECO:0000305" key="4"/>
<dbReference type="EC" id="1.1.1.22"/>
<dbReference type="EMBL" id="FN386609">
    <property type="protein sequence ID" value="CAY46591.1"/>
    <property type="molecule type" value="Genomic_DNA"/>
</dbReference>
<dbReference type="EMBL" id="CP001956">
    <property type="protein sequence ID" value="ADE05103.1"/>
    <property type="molecule type" value="Genomic_DNA"/>
</dbReference>
<dbReference type="RefSeq" id="WP_004041409.1">
    <property type="nucleotide sequence ID" value="NC_013967.1"/>
</dbReference>
<dbReference type="SMR" id="D4GYH5"/>
<dbReference type="STRING" id="309800.HVO_1531"/>
<dbReference type="PaxDb" id="309800-C498_03010"/>
<dbReference type="EnsemblBacteria" id="ADE05103">
    <property type="protein sequence ID" value="ADE05103"/>
    <property type="gene ID" value="HVO_1531"/>
</dbReference>
<dbReference type="GeneID" id="8924832"/>
<dbReference type="KEGG" id="hvo:HVO_1531"/>
<dbReference type="eggNOG" id="arCOG00253">
    <property type="taxonomic scope" value="Archaea"/>
</dbReference>
<dbReference type="HOGENOM" id="CLU_023810_1_1_2"/>
<dbReference type="OrthoDB" id="59839at2157"/>
<dbReference type="BioCyc" id="MetaCyc:MONOMER-19291"/>
<dbReference type="BRENDA" id="1.1.1.22">
    <property type="organism ID" value="2561"/>
</dbReference>
<dbReference type="UniPathway" id="UPA00038">
    <property type="reaction ID" value="UER00491"/>
</dbReference>
<dbReference type="UniPathway" id="UPA00977"/>
<dbReference type="Proteomes" id="UP000008243">
    <property type="component" value="Chromosome"/>
</dbReference>
<dbReference type="GO" id="GO:0051287">
    <property type="term" value="F:NAD binding"/>
    <property type="evidence" value="ECO:0007669"/>
    <property type="project" value="InterPro"/>
</dbReference>
<dbReference type="GO" id="GO:0003979">
    <property type="term" value="F:UDP-glucose 6-dehydrogenase activity"/>
    <property type="evidence" value="ECO:0007669"/>
    <property type="project" value="UniProtKB-EC"/>
</dbReference>
<dbReference type="GO" id="GO:0000271">
    <property type="term" value="P:polysaccharide biosynthetic process"/>
    <property type="evidence" value="ECO:0007669"/>
    <property type="project" value="InterPro"/>
</dbReference>
<dbReference type="GO" id="GO:0045232">
    <property type="term" value="P:S-layer organization"/>
    <property type="evidence" value="ECO:0007669"/>
    <property type="project" value="UniProtKB-UniPathway"/>
</dbReference>
<dbReference type="GO" id="GO:0006065">
    <property type="term" value="P:UDP-glucuronate biosynthetic process"/>
    <property type="evidence" value="ECO:0007669"/>
    <property type="project" value="UniProtKB-UniPathway"/>
</dbReference>
<dbReference type="Gene3D" id="1.20.5.100">
    <property type="entry name" value="Cytochrome c1, transmembrane anchor, C-terminal"/>
    <property type="match status" value="1"/>
</dbReference>
<dbReference type="Gene3D" id="3.40.50.720">
    <property type="entry name" value="NAD(P)-binding Rossmann-like Domain"/>
    <property type="match status" value="2"/>
</dbReference>
<dbReference type="InterPro" id="IPR008927">
    <property type="entry name" value="6-PGluconate_DH-like_C_sf"/>
</dbReference>
<dbReference type="InterPro" id="IPR036291">
    <property type="entry name" value="NAD(P)-bd_dom_sf"/>
</dbReference>
<dbReference type="InterPro" id="IPR017476">
    <property type="entry name" value="UDP-Glc/GDP-Man"/>
</dbReference>
<dbReference type="InterPro" id="IPR014027">
    <property type="entry name" value="UDP-Glc/GDP-Man_DH_C"/>
</dbReference>
<dbReference type="InterPro" id="IPR036220">
    <property type="entry name" value="UDP-Glc/GDP-Man_DH_C_sf"/>
</dbReference>
<dbReference type="InterPro" id="IPR014026">
    <property type="entry name" value="UDP-Glc/GDP-Man_DH_dimer"/>
</dbReference>
<dbReference type="InterPro" id="IPR001732">
    <property type="entry name" value="UDP-Glc/GDP-Man_DH_N"/>
</dbReference>
<dbReference type="InterPro" id="IPR054886">
    <property type="entry name" value="UDPGDh_AglM"/>
</dbReference>
<dbReference type="InterPro" id="IPR028357">
    <property type="entry name" value="UDPglc_DH_bac"/>
</dbReference>
<dbReference type="NCBIfam" id="TIGR03026">
    <property type="entry name" value="NDP-sugDHase"/>
    <property type="match status" value="1"/>
</dbReference>
<dbReference type="NCBIfam" id="NF041297">
    <property type="entry name" value="UDPGDh_AglM"/>
    <property type="match status" value="1"/>
</dbReference>
<dbReference type="PANTHER" id="PTHR43750">
    <property type="entry name" value="UDP-GLUCOSE 6-DEHYDROGENASE TUAD"/>
    <property type="match status" value="1"/>
</dbReference>
<dbReference type="PANTHER" id="PTHR43750:SF3">
    <property type="entry name" value="UDP-GLUCOSE 6-DEHYDROGENASE TUAD"/>
    <property type="match status" value="1"/>
</dbReference>
<dbReference type="Pfam" id="PF00984">
    <property type="entry name" value="UDPG_MGDP_dh"/>
    <property type="match status" value="1"/>
</dbReference>
<dbReference type="Pfam" id="PF03720">
    <property type="entry name" value="UDPG_MGDP_dh_C"/>
    <property type="match status" value="1"/>
</dbReference>
<dbReference type="Pfam" id="PF03721">
    <property type="entry name" value="UDPG_MGDP_dh_N"/>
    <property type="match status" value="1"/>
</dbReference>
<dbReference type="PIRSF" id="PIRSF500134">
    <property type="entry name" value="UDPglc_DH_bac"/>
    <property type="match status" value="1"/>
</dbReference>
<dbReference type="PIRSF" id="PIRSF000124">
    <property type="entry name" value="UDPglc_GDPman_dh"/>
    <property type="match status" value="1"/>
</dbReference>
<dbReference type="SMART" id="SM00984">
    <property type="entry name" value="UDPG_MGDP_dh_C"/>
    <property type="match status" value="1"/>
</dbReference>
<dbReference type="SUPFAM" id="SSF48179">
    <property type="entry name" value="6-phosphogluconate dehydrogenase C-terminal domain-like"/>
    <property type="match status" value="1"/>
</dbReference>
<dbReference type="SUPFAM" id="SSF51735">
    <property type="entry name" value="NAD(P)-binding Rossmann-fold domains"/>
    <property type="match status" value="1"/>
</dbReference>
<dbReference type="SUPFAM" id="SSF52413">
    <property type="entry name" value="UDP-glucose/GDP-mannose dehydrogenase C-terminal domain"/>
    <property type="match status" value="1"/>
</dbReference>
<proteinExistence type="evidence at protein level"/>
<comment type="function">
    <text evidence="2 3">Involved in the assembly of a N-linked pentasaccharide that decorates the S-layer glycoprotein and flagellins. Involved in the biosynthesis of the hexuronic acids found at both positions 2 and 3 of the pentasaccharide.</text>
</comment>
<comment type="catalytic activity">
    <reaction evidence="2">
        <text>UDP-alpha-D-glucose + 2 NAD(+) + H2O = UDP-alpha-D-glucuronate + 2 NADH + 3 H(+)</text>
        <dbReference type="Rhea" id="RHEA:23596"/>
        <dbReference type="ChEBI" id="CHEBI:15377"/>
        <dbReference type="ChEBI" id="CHEBI:15378"/>
        <dbReference type="ChEBI" id="CHEBI:57540"/>
        <dbReference type="ChEBI" id="CHEBI:57945"/>
        <dbReference type="ChEBI" id="CHEBI:58052"/>
        <dbReference type="ChEBI" id="CHEBI:58885"/>
        <dbReference type="EC" id="1.1.1.22"/>
    </reaction>
</comment>
<comment type="activity regulation">
    <text evidence="2">Activity improves as salinity decreases.</text>
</comment>
<comment type="pathway">
    <text evidence="2">Nucleotide-sugar biosynthesis; UDP-alpha-D-glucuronate biosynthesis; UDP-alpha-D-glucuronate from UDP-alpha-D-glucose: step 1/1.</text>
</comment>
<comment type="pathway">
    <text evidence="2">Cell surface structure biogenesis; S-layer biogenesis.</text>
</comment>
<comment type="disruption phenotype">
    <text evidence="3">Mutants exhibit defective or limited motility.</text>
</comment>
<comment type="similarity">
    <text evidence="4">Belongs to the UDP-glucose/GDP-mannose dehydrogenase family.</text>
</comment>